<keyword id="KW-0007">Acetylation</keyword>
<keyword id="KW-0520">NAD</keyword>
<keyword id="KW-0560">Oxidoreductase</keyword>
<dbReference type="EC" id="1.1.1.17" evidence="1"/>
<dbReference type="EMBL" id="CU928163">
    <property type="protein sequence ID" value="CAR15252.1"/>
    <property type="molecule type" value="Genomic_DNA"/>
</dbReference>
<dbReference type="RefSeq" id="WP_000645425.1">
    <property type="nucleotide sequence ID" value="NC_011751.1"/>
</dbReference>
<dbReference type="RefSeq" id="YP_002414752.1">
    <property type="nucleotide sequence ID" value="NC_011751.1"/>
</dbReference>
<dbReference type="SMR" id="B7NEQ1"/>
<dbReference type="STRING" id="585056.ECUMN_4111"/>
<dbReference type="KEGG" id="eum:ECUMN_4111"/>
<dbReference type="PATRIC" id="fig|585056.7.peg.4284"/>
<dbReference type="HOGENOM" id="CLU_036089_2_0_6"/>
<dbReference type="Proteomes" id="UP000007097">
    <property type="component" value="Chromosome"/>
</dbReference>
<dbReference type="GO" id="GO:0005829">
    <property type="term" value="C:cytosol"/>
    <property type="evidence" value="ECO:0007669"/>
    <property type="project" value="TreeGrafter"/>
</dbReference>
<dbReference type="GO" id="GO:0008926">
    <property type="term" value="F:mannitol-1-phosphate 5-dehydrogenase activity"/>
    <property type="evidence" value="ECO:0007669"/>
    <property type="project" value="UniProtKB-UniRule"/>
</dbReference>
<dbReference type="GO" id="GO:0019592">
    <property type="term" value="P:mannitol catabolic process"/>
    <property type="evidence" value="ECO:0007669"/>
    <property type="project" value="TreeGrafter"/>
</dbReference>
<dbReference type="FunFam" id="1.10.1040.10:FF:000009">
    <property type="entry name" value="Mannitol-1-phosphate 5-dehydrogenase"/>
    <property type="match status" value="1"/>
</dbReference>
<dbReference type="FunFam" id="3.40.50.720:FF:000075">
    <property type="entry name" value="Mannitol-1-phosphate 5-dehydrogenase"/>
    <property type="match status" value="1"/>
</dbReference>
<dbReference type="Gene3D" id="1.10.1040.10">
    <property type="entry name" value="N-(1-d-carboxylethyl)-l-norvaline Dehydrogenase, domain 2"/>
    <property type="match status" value="1"/>
</dbReference>
<dbReference type="Gene3D" id="3.40.50.720">
    <property type="entry name" value="NAD(P)-binding Rossmann-like Domain"/>
    <property type="match status" value="1"/>
</dbReference>
<dbReference type="HAMAP" id="MF_00196">
    <property type="entry name" value="Mannitol_dehydrog"/>
    <property type="match status" value="1"/>
</dbReference>
<dbReference type="InterPro" id="IPR008927">
    <property type="entry name" value="6-PGluconate_DH-like_C_sf"/>
</dbReference>
<dbReference type="InterPro" id="IPR013328">
    <property type="entry name" value="6PGD_dom2"/>
</dbReference>
<dbReference type="InterPro" id="IPR023028">
    <property type="entry name" value="Mannitol_1_phos_5_DH"/>
</dbReference>
<dbReference type="InterPro" id="IPR000669">
    <property type="entry name" value="Mannitol_DH"/>
</dbReference>
<dbReference type="InterPro" id="IPR013118">
    <property type="entry name" value="Mannitol_DH_C"/>
</dbReference>
<dbReference type="InterPro" id="IPR023027">
    <property type="entry name" value="Mannitol_DH_CS"/>
</dbReference>
<dbReference type="InterPro" id="IPR013131">
    <property type="entry name" value="Mannitol_DH_N"/>
</dbReference>
<dbReference type="InterPro" id="IPR036291">
    <property type="entry name" value="NAD(P)-bd_dom_sf"/>
</dbReference>
<dbReference type="NCBIfam" id="NF002646">
    <property type="entry name" value="PRK02318.1-2"/>
    <property type="match status" value="1"/>
</dbReference>
<dbReference type="NCBIfam" id="NF002647">
    <property type="entry name" value="PRK02318.1-3"/>
    <property type="match status" value="1"/>
</dbReference>
<dbReference type="NCBIfam" id="NF002648">
    <property type="entry name" value="PRK02318.1-4"/>
    <property type="match status" value="1"/>
</dbReference>
<dbReference type="NCBIfam" id="NF002650">
    <property type="entry name" value="PRK02318.2-2"/>
    <property type="match status" value="1"/>
</dbReference>
<dbReference type="NCBIfam" id="NF002652">
    <property type="entry name" value="PRK02318.2-5"/>
    <property type="match status" value="1"/>
</dbReference>
<dbReference type="PANTHER" id="PTHR30524:SF0">
    <property type="entry name" value="ALTRONATE OXIDOREDUCTASE-RELATED"/>
    <property type="match status" value="1"/>
</dbReference>
<dbReference type="PANTHER" id="PTHR30524">
    <property type="entry name" value="MANNITOL-1-PHOSPHATE 5-DEHYDROGENASE"/>
    <property type="match status" value="1"/>
</dbReference>
<dbReference type="Pfam" id="PF01232">
    <property type="entry name" value="Mannitol_dh"/>
    <property type="match status" value="1"/>
</dbReference>
<dbReference type="Pfam" id="PF08125">
    <property type="entry name" value="Mannitol_dh_C"/>
    <property type="match status" value="1"/>
</dbReference>
<dbReference type="PRINTS" id="PR00084">
    <property type="entry name" value="MTLDHDRGNASE"/>
</dbReference>
<dbReference type="SUPFAM" id="SSF48179">
    <property type="entry name" value="6-phosphogluconate dehydrogenase C-terminal domain-like"/>
    <property type="match status" value="1"/>
</dbReference>
<dbReference type="SUPFAM" id="SSF51735">
    <property type="entry name" value="NAD(P)-binding Rossmann-fold domains"/>
    <property type="match status" value="1"/>
</dbReference>
<dbReference type="PROSITE" id="PS00974">
    <property type="entry name" value="MANNITOL_DHGENASE"/>
    <property type="match status" value="1"/>
</dbReference>
<organism>
    <name type="scientific">Escherichia coli O17:K52:H18 (strain UMN026 / ExPEC)</name>
    <dbReference type="NCBI Taxonomy" id="585056"/>
    <lineage>
        <taxon>Bacteria</taxon>
        <taxon>Pseudomonadati</taxon>
        <taxon>Pseudomonadota</taxon>
        <taxon>Gammaproteobacteria</taxon>
        <taxon>Enterobacterales</taxon>
        <taxon>Enterobacteriaceae</taxon>
        <taxon>Escherichia</taxon>
    </lineage>
</organism>
<comment type="catalytic activity">
    <reaction evidence="1">
        <text>D-mannitol 1-phosphate + NAD(+) = beta-D-fructose 6-phosphate + NADH + H(+)</text>
        <dbReference type="Rhea" id="RHEA:19661"/>
        <dbReference type="ChEBI" id="CHEBI:15378"/>
        <dbReference type="ChEBI" id="CHEBI:57540"/>
        <dbReference type="ChEBI" id="CHEBI:57634"/>
        <dbReference type="ChEBI" id="CHEBI:57945"/>
        <dbReference type="ChEBI" id="CHEBI:61381"/>
        <dbReference type="EC" id="1.1.1.17"/>
    </reaction>
</comment>
<comment type="similarity">
    <text evidence="1">Belongs to the mannitol dehydrogenase family.</text>
</comment>
<evidence type="ECO:0000255" key="1">
    <source>
        <dbReference type="HAMAP-Rule" id="MF_00196"/>
    </source>
</evidence>
<reference key="1">
    <citation type="journal article" date="2009" name="PLoS Genet.">
        <title>Organised genome dynamics in the Escherichia coli species results in highly diverse adaptive paths.</title>
        <authorList>
            <person name="Touchon M."/>
            <person name="Hoede C."/>
            <person name="Tenaillon O."/>
            <person name="Barbe V."/>
            <person name="Baeriswyl S."/>
            <person name="Bidet P."/>
            <person name="Bingen E."/>
            <person name="Bonacorsi S."/>
            <person name="Bouchier C."/>
            <person name="Bouvet O."/>
            <person name="Calteau A."/>
            <person name="Chiapello H."/>
            <person name="Clermont O."/>
            <person name="Cruveiller S."/>
            <person name="Danchin A."/>
            <person name="Diard M."/>
            <person name="Dossat C."/>
            <person name="Karoui M.E."/>
            <person name="Frapy E."/>
            <person name="Garry L."/>
            <person name="Ghigo J.M."/>
            <person name="Gilles A.M."/>
            <person name="Johnson J."/>
            <person name="Le Bouguenec C."/>
            <person name="Lescat M."/>
            <person name="Mangenot S."/>
            <person name="Martinez-Jehanne V."/>
            <person name="Matic I."/>
            <person name="Nassif X."/>
            <person name="Oztas S."/>
            <person name="Petit M.A."/>
            <person name="Pichon C."/>
            <person name="Rouy Z."/>
            <person name="Ruf C.S."/>
            <person name="Schneider D."/>
            <person name="Tourret J."/>
            <person name="Vacherie B."/>
            <person name="Vallenet D."/>
            <person name="Medigue C."/>
            <person name="Rocha E.P.C."/>
            <person name="Denamur E."/>
        </authorList>
    </citation>
    <scope>NUCLEOTIDE SEQUENCE [LARGE SCALE GENOMIC DNA]</scope>
    <source>
        <strain>UMN026 / ExPEC</strain>
    </source>
</reference>
<proteinExistence type="inferred from homology"/>
<sequence>MKALHFGAGNIGRGFIGKLLADAGIQLTFADVNQVVLDALNARHSYQVHVVGETEQVDTVSGVNAVSSIGDDVVDLIAQVDLVTTAVGPVVLERIAPAIAKGLVKRKEQGNESPLNIIACENMVRGTTQLKGHVMNALPEDAKAWVEEHVGFVDSAVDRIVPPSASATNDPLEVTVETFSEWIVDKTQFKGALPNIPGMELTDNLMAFVERKLFTLNTGHAITAYLGKLAGHQTIRDAILDEKIRAVVKGAMEESGAVLIKRYGFDADKHAAYIRKILGRFENPYLKDDVERVGRQPLRKLSAGDRLIKPLLGTLEYGLPHKNLIEGIAAAMHFRSEDDPQAQELAALIADKGPQAALAQISGLDANSEVVSEAVTAYKAMQ</sequence>
<feature type="chain" id="PRO_1000118657" description="Mannitol-1-phosphate 5-dehydrogenase">
    <location>
        <begin position="1"/>
        <end position="382"/>
    </location>
</feature>
<feature type="binding site" evidence="1">
    <location>
        <begin position="3"/>
        <end position="14"/>
    </location>
    <ligand>
        <name>NAD(+)</name>
        <dbReference type="ChEBI" id="CHEBI:57540"/>
    </ligand>
</feature>
<feature type="modified residue" description="N6-acetyllysine" evidence="1">
    <location>
        <position position="269"/>
    </location>
</feature>
<gene>
    <name evidence="1" type="primary">mtlD</name>
    <name type="ordered locus">ECUMN_4111</name>
</gene>
<protein>
    <recommendedName>
        <fullName evidence="1">Mannitol-1-phosphate 5-dehydrogenase</fullName>
        <ecNumber evidence="1">1.1.1.17</ecNumber>
    </recommendedName>
</protein>
<name>MTLD_ECOLU</name>
<accession>B7NEQ1</accession>